<accession>A1WV97</accession>
<reference key="1">
    <citation type="submission" date="2006-12" db="EMBL/GenBank/DDBJ databases">
        <title>Complete sequence of Halorhodospira halophila SL1.</title>
        <authorList>
            <consortium name="US DOE Joint Genome Institute"/>
            <person name="Copeland A."/>
            <person name="Lucas S."/>
            <person name="Lapidus A."/>
            <person name="Barry K."/>
            <person name="Detter J.C."/>
            <person name="Glavina del Rio T."/>
            <person name="Hammon N."/>
            <person name="Israni S."/>
            <person name="Dalin E."/>
            <person name="Tice H."/>
            <person name="Pitluck S."/>
            <person name="Saunders E."/>
            <person name="Brettin T."/>
            <person name="Bruce D."/>
            <person name="Han C."/>
            <person name="Tapia R."/>
            <person name="Schmutz J."/>
            <person name="Larimer F."/>
            <person name="Land M."/>
            <person name="Hauser L."/>
            <person name="Kyrpides N."/>
            <person name="Mikhailova N."/>
            <person name="Hoff W."/>
            <person name="Richardson P."/>
        </authorList>
    </citation>
    <scope>NUCLEOTIDE SEQUENCE [LARGE SCALE GENOMIC DNA]</scope>
    <source>
        <strain>DSM 244 / SL1</strain>
    </source>
</reference>
<organism>
    <name type="scientific">Halorhodospira halophila (strain DSM 244 / SL1)</name>
    <name type="common">Ectothiorhodospira halophila (strain DSM 244 / SL1)</name>
    <dbReference type="NCBI Taxonomy" id="349124"/>
    <lineage>
        <taxon>Bacteria</taxon>
        <taxon>Pseudomonadati</taxon>
        <taxon>Pseudomonadota</taxon>
        <taxon>Gammaproteobacteria</taxon>
        <taxon>Chromatiales</taxon>
        <taxon>Ectothiorhodospiraceae</taxon>
        <taxon>Halorhodospira</taxon>
    </lineage>
</organism>
<dbReference type="EC" id="2.7.7.6" evidence="1"/>
<dbReference type="EMBL" id="CP000544">
    <property type="protein sequence ID" value="ABM61609.1"/>
    <property type="molecule type" value="Genomic_DNA"/>
</dbReference>
<dbReference type="RefSeq" id="WP_011813632.1">
    <property type="nucleotide sequence ID" value="NC_008789.1"/>
</dbReference>
<dbReference type="SMR" id="A1WV97"/>
<dbReference type="STRING" id="349124.Hhal_0833"/>
<dbReference type="KEGG" id="hha:Hhal_0833"/>
<dbReference type="eggNOG" id="COG0202">
    <property type="taxonomic scope" value="Bacteria"/>
</dbReference>
<dbReference type="HOGENOM" id="CLU_053084_0_1_6"/>
<dbReference type="OrthoDB" id="9805706at2"/>
<dbReference type="Proteomes" id="UP000000647">
    <property type="component" value="Chromosome"/>
</dbReference>
<dbReference type="GO" id="GO:0005737">
    <property type="term" value="C:cytoplasm"/>
    <property type="evidence" value="ECO:0007669"/>
    <property type="project" value="UniProtKB-ARBA"/>
</dbReference>
<dbReference type="GO" id="GO:0000428">
    <property type="term" value="C:DNA-directed RNA polymerase complex"/>
    <property type="evidence" value="ECO:0007669"/>
    <property type="project" value="UniProtKB-KW"/>
</dbReference>
<dbReference type="GO" id="GO:0003677">
    <property type="term" value="F:DNA binding"/>
    <property type="evidence" value="ECO:0007669"/>
    <property type="project" value="UniProtKB-UniRule"/>
</dbReference>
<dbReference type="GO" id="GO:0003899">
    <property type="term" value="F:DNA-directed RNA polymerase activity"/>
    <property type="evidence" value="ECO:0007669"/>
    <property type="project" value="UniProtKB-UniRule"/>
</dbReference>
<dbReference type="GO" id="GO:0046983">
    <property type="term" value="F:protein dimerization activity"/>
    <property type="evidence" value="ECO:0007669"/>
    <property type="project" value="InterPro"/>
</dbReference>
<dbReference type="GO" id="GO:0006351">
    <property type="term" value="P:DNA-templated transcription"/>
    <property type="evidence" value="ECO:0007669"/>
    <property type="project" value="UniProtKB-UniRule"/>
</dbReference>
<dbReference type="CDD" id="cd06928">
    <property type="entry name" value="RNAP_alpha_NTD"/>
    <property type="match status" value="1"/>
</dbReference>
<dbReference type="FunFam" id="1.10.150.20:FF:000001">
    <property type="entry name" value="DNA-directed RNA polymerase subunit alpha"/>
    <property type="match status" value="1"/>
</dbReference>
<dbReference type="FunFam" id="2.170.120.12:FF:000001">
    <property type="entry name" value="DNA-directed RNA polymerase subunit alpha"/>
    <property type="match status" value="1"/>
</dbReference>
<dbReference type="Gene3D" id="1.10.150.20">
    <property type="entry name" value="5' to 3' exonuclease, C-terminal subdomain"/>
    <property type="match status" value="1"/>
</dbReference>
<dbReference type="Gene3D" id="2.170.120.12">
    <property type="entry name" value="DNA-directed RNA polymerase, insert domain"/>
    <property type="match status" value="1"/>
</dbReference>
<dbReference type="Gene3D" id="3.30.1360.10">
    <property type="entry name" value="RNA polymerase, RBP11-like subunit"/>
    <property type="match status" value="1"/>
</dbReference>
<dbReference type="HAMAP" id="MF_00059">
    <property type="entry name" value="RNApol_bact_RpoA"/>
    <property type="match status" value="1"/>
</dbReference>
<dbReference type="InterPro" id="IPR011262">
    <property type="entry name" value="DNA-dir_RNA_pol_insert"/>
</dbReference>
<dbReference type="InterPro" id="IPR011263">
    <property type="entry name" value="DNA-dir_RNA_pol_RpoA/D/Rpb3"/>
</dbReference>
<dbReference type="InterPro" id="IPR011773">
    <property type="entry name" value="DNA-dir_RpoA"/>
</dbReference>
<dbReference type="InterPro" id="IPR036603">
    <property type="entry name" value="RBP11-like"/>
</dbReference>
<dbReference type="InterPro" id="IPR011260">
    <property type="entry name" value="RNAP_asu_C"/>
</dbReference>
<dbReference type="InterPro" id="IPR036643">
    <property type="entry name" value="RNApol_insert_sf"/>
</dbReference>
<dbReference type="NCBIfam" id="NF003513">
    <property type="entry name" value="PRK05182.1-2"/>
    <property type="match status" value="1"/>
</dbReference>
<dbReference type="NCBIfam" id="NF003519">
    <property type="entry name" value="PRK05182.2-5"/>
    <property type="match status" value="1"/>
</dbReference>
<dbReference type="NCBIfam" id="TIGR02027">
    <property type="entry name" value="rpoA"/>
    <property type="match status" value="1"/>
</dbReference>
<dbReference type="Pfam" id="PF01000">
    <property type="entry name" value="RNA_pol_A_bac"/>
    <property type="match status" value="1"/>
</dbReference>
<dbReference type="Pfam" id="PF03118">
    <property type="entry name" value="RNA_pol_A_CTD"/>
    <property type="match status" value="1"/>
</dbReference>
<dbReference type="Pfam" id="PF01193">
    <property type="entry name" value="RNA_pol_L"/>
    <property type="match status" value="1"/>
</dbReference>
<dbReference type="SMART" id="SM00662">
    <property type="entry name" value="RPOLD"/>
    <property type="match status" value="1"/>
</dbReference>
<dbReference type="SUPFAM" id="SSF47789">
    <property type="entry name" value="C-terminal domain of RNA polymerase alpha subunit"/>
    <property type="match status" value="1"/>
</dbReference>
<dbReference type="SUPFAM" id="SSF56553">
    <property type="entry name" value="Insert subdomain of RNA polymerase alpha subunit"/>
    <property type="match status" value="1"/>
</dbReference>
<dbReference type="SUPFAM" id="SSF55257">
    <property type="entry name" value="RBP11-like subunits of RNA polymerase"/>
    <property type="match status" value="1"/>
</dbReference>
<evidence type="ECO:0000255" key="1">
    <source>
        <dbReference type="HAMAP-Rule" id="MF_00059"/>
    </source>
</evidence>
<sequence length="332" mass="36549">MKGYLKDFLKPRSVEIEPLSDNRAKVVLEPLERGFGHTLGNALRRLLLSSMPGTAVTEVEIEGVQHEYTAVEGIHEDTVDILLNLKDLAVRLNERDSVTLSVEKQGPGSVTAADIATDHDVEIQNPDLHIATITHEQPFKASLKIERGRGYLPVTAREEEDTRTIGHLALDASFSPVRRVSYAVESARVEQRTDLDKLVLDVETNGVVTPEEAVKFAASLLRDQLSVFVDLEGGLLEGGDEQEEPEIDPVLLRPIDDLELTVRSANCLKAESIHFVGDLVQRTEVELLKTPNLGKKSLNEIKDTLAEHGLSLGMQLDNWPPPSLGDRARIAG</sequence>
<name>RPOA_HALHL</name>
<comment type="function">
    <text evidence="1">DNA-dependent RNA polymerase catalyzes the transcription of DNA into RNA using the four ribonucleoside triphosphates as substrates.</text>
</comment>
<comment type="catalytic activity">
    <reaction evidence="1">
        <text>RNA(n) + a ribonucleoside 5'-triphosphate = RNA(n+1) + diphosphate</text>
        <dbReference type="Rhea" id="RHEA:21248"/>
        <dbReference type="Rhea" id="RHEA-COMP:14527"/>
        <dbReference type="Rhea" id="RHEA-COMP:17342"/>
        <dbReference type="ChEBI" id="CHEBI:33019"/>
        <dbReference type="ChEBI" id="CHEBI:61557"/>
        <dbReference type="ChEBI" id="CHEBI:140395"/>
        <dbReference type="EC" id="2.7.7.6"/>
    </reaction>
</comment>
<comment type="subunit">
    <text evidence="1">Homodimer. The RNAP catalytic core consists of 2 alpha, 1 beta, 1 beta' and 1 omega subunit. When a sigma factor is associated with the core the holoenzyme is formed, which can initiate transcription.</text>
</comment>
<comment type="domain">
    <text evidence="1">The N-terminal domain is essential for RNAP assembly and basal transcription, whereas the C-terminal domain is involved in interaction with transcriptional regulators and with upstream promoter elements.</text>
</comment>
<comment type="similarity">
    <text evidence="1">Belongs to the RNA polymerase alpha chain family.</text>
</comment>
<protein>
    <recommendedName>
        <fullName evidence="1">DNA-directed RNA polymerase subunit alpha</fullName>
        <shortName evidence="1">RNAP subunit alpha</shortName>
        <ecNumber evidence="1">2.7.7.6</ecNumber>
    </recommendedName>
    <alternativeName>
        <fullName evidence="1">RNA polymerase subunit alpha</fullName>
    </alternativeName>
    <alternativeName>
        <fullName evidence="1">Transcriptase subunit alpha</fullName>
    </alternativeName>
</protein>
<keyword id="KW-0240">DNA-directed RNA polymerase</keyword>
<keyword id="KW-0548">Nucleotidyltransferase</keyword>
<keyword id="KW-1185">Reference proteome</keyword>
<keyword id="KW-0804">Transcription</keyword>
<keyword id="KW-0808">Transferase</keyword>
<feature type="chain" id="PRO_0000296817" description="DNA-directed RNA polymerase subunit alpha">
    <location>
        <begin position="1"/>
        <end position="332"/>
    </location>
</feature>
<feature type="region of interest" description="Alpha N-terminal domain (alpha-NTD)" evidence="1">
    <location>
        <begin position="1"/>
        <end position="232"/>
    </location>
</feature>
<feature type="region of interest" description="Alpha C-terminal domain (alpha-CTD)" evidence="1">
    <location>
        <begin position="247"/>
        <end position="332"/>
    </location>
</feature>
<proteinExistence type="inferred from homology"/>
<gene>
    <name evidence="1" type="primary">rpoA</name>
    <name type="ordered locus">Hhal_0833</name>
</gene>